<sequence>MTVEERSNTAKVDILGVDFDNTTMLQMVENIKTFFANQSTNNLFIVTANPEIVNYATTHQAYLELINQASYIVADGTGVVKASHRLKQPLAHRIPGIELMDECLKIAHVNHQKVFLLGATNEVVEAAQYALQQRYPNISFAHHHGYIDLEDETVVKRIKLFKPDYIFVGMGFPKQEEWIMTHENQFESTVMMGVGGSLEVFAGAKKRAPYIFRKLNIEWIYRALMDWKRIGRLKSIPIFMYKIAKAKRKIKKAK</sequence>
<dbReference type="EC" id="2.4.1.187" evidence="1"/>
<dbReference type="EMBL" id="BA000033">
    <property type="protein sequence ID" value="BAB94463.1"/>
    <property type="molecule type" value="Genomic_DNA"/>
</dbReference>
<dbReference type="RefSeq" id="WP_000215390.1">
    <property type="nucleotide sequence ID" value="NC_003923.1"/>
</dbReference>
<dbReference type="SMR" id="Q8NXS7"/>
<dbReference type="CAZy" id="GT26">
    <property type="family name" value="Glycosyltransferase Family 26"/>
</dbReference>
<dbReference type="KEGG" id="sam:MW0598"/>
<dbReference type="HOGENOM" id="CLU_063203_3_1_9"/>
<dbReference type="UniPathway" id="UPA00790"/>
<dbReference type="GO" id="GO:0047244">
    <property type="term" value="F:N-acetylglucosaminyldiphosphoundecaprenol N-acetyl-beta-D-mannosaminyltransferase activity"/>
    <property type="evidence" value="ECO:0007669"/>
    <property type="project" value="UniProtKB-UniRule"/>
</dbReference>
<dbReference type="GO" id="GO:0071555">
    <property type="term" value="P:cell wall organization"/>
    <property type="evidence" value="ECO:0007669"/>
    <property type="project" value="UniProtKB-KW"/>
</dbReference>
<dbReference type="GO" id="GO:0019350">
    <property type="term" value="P:teichoic acid biosynthetic process"/>
    <property type="evidence" value="ECO:0007669"/>
    <property type="project" value="UniProtKB-UniRule"/>
</dbReference>
<dbReference type="CDD" id="cd06533">
    <property type="entry name" value="Glyco_transf_WecG_TagA"/>
    <property type="match status" value="1"/>
</dbReference>
<dbReference type="HAMAP" id="MF_02070">
    <property type="entry name" value="TagA_TarA"/>
    <property type="match status" value="1"/>
</dbReference>
<dbReference type="InterPro" id="IPR053391">
    <property type="entry name" value="TAB_Glycosyltransferase"/>
</dbReference>
<dbReference type="InterPro" id="IPR034714">
    <property type="entry name" value="TagA_TarA"/>
</dbReference>
<dbReference type="InterPro" id="IPR004629">
    <property type="entry name" value="WecG_TagA_CpsF"/>
</dbReference>
<dbReference type="NCBIfam" id="NF041710">
    <property type="entry name" value="UDPacetylman_taseTarA"/>
    <property type="match status" value="1"/>
</dbReference>
<dbReference type="NCBIfam" id="TIGR00696">
    <property type="entry name" value="wecG_tagA_cpsF"/>
    <property type="match status" value="1"/>
</dbReference>
<dbReference type="PANTHER" id="PTHR34136">
    <property type="match status" value="1"/>
</dbReference>
<dbReference type="PANTHER" id="PTHR34136:SF1">
    <property type="entry name" value="UDP-N-ACETYL-D-MANNOSAMINURONIC ACID TRANSFERASE"/>
    <property type="match status" value="1"/>
</dbReference>
<dbReference type="Pfam" id="PF03808">
    <property type="entry name" value="Glyco_tran_WecG"/>
    <property type="match status" value="1"/>
</dbReference>
<feature type="chain" id="PRO_0000208446" description="N-acetylglucosaminyldiphosphoundecaprenol N-acetyl-beta-D-mannosaminyltransferase">
    <location>
        <begin position="1"/>
        <end position="254"/>
    </location>
</feature>
<organism>
    <name type="scientific">Staphylococcus aureus (strain MW2)</name>
    <dbReference type="NCBI Taxonomy" id="196620"/>
    <lineage>
        <taxon>Bacteria</taxon>
        <taxon>Bacillati</taxon>
        <taxon>Bacillota</taxon>
        <taxon>Bacilli</taxon>
        <taxon>Bacillales</taxon>
        <taxon>Staphylococcaceae</taxon>
        <taxon>Staphylococcus</taxon>
    </lineage>
</organism>
<proteinExistence type="inferred from homology"/>
<comment type="function">
    <text evidence="1">Catalyzes the conversion of GlcNAc-PP-undecaprenol into ManNAc-GlcNAc-PP-undecaprenol, the first committed lipid intermediate in the de novo synthesis of teichoic acid.</text>
</comment>
<comment type="catalytic activity">
    <reaction evidence="1">
        <text>UDP-N-acetyl-alpha-D-mannosamine + N-acetyl-alpha-D-glucosaminyl-di-trans,octa-cis-undecaprenyl diphosphate = N-acetyl-beta-D-mannosaminyl-(1-&gt;4)-N-acetyl-alpha-D-glucosaminyl di-trans,octa-cis-undecaprenyl diphosphate + UDP + H(+)</text>
        <dbReference type="Rhea" id="RHEA:16053"/>
        <dbReference type="ChEBI" id="CHEBI:15378"/>
        <dbReference type="ChEBI" id="CHEBI:58223"/>
        <dbReference type="ChEBI" id="CHEBI:62959"/>
        <dbReference type="ChEBI" id="CHEBI:68623"/>
        <dbReference type="ChEBI" id="CHEBI:132210"/>
        <dbReference type="EC" id="2.4.1.187"/>
    </reaction>
</comment>
<comment type="pathway">
    <text evidence="2">Cell wall biogenesis; poly(ribitol phosphate) teichoic acid biosynthesis.</text>
</comment>
<comment type="similarity">
    <text evidence="1">Belongs to the glycosyltransferase 26 family. TagA/TarA subfamily.</text>
</comment>
<gene>
    <name type="primary">tarA</name>
    <name type="ordered locus">MW0598</name>
</gene>
<keyword id="KW-0961">Cell wall biogenesis/degradation</keyword>
<keyword id="KW-0328">Glycosyltransferase</keyword>
<keyword id="KW-0777">Teichoic acid biosynthesis</keyword>
<keyword id="KW-0808">Transferase</keyword>
<accession>Q8NXS7</accession>
<reference key="1">
    <citation type="journal article" date="2002" name="Lancet">
        <title>Genome and virulence determinants of high virulence community-acquired MRSA.</title>
        <authorList>
            <person name="Baba T."/>
            <person name="Takeuchi F."/>
            <person name="Kuroda M."/>
            <person name="Yuzawa H."/>
            <person name="Aoki K."/>
            <person name="Oguchi A."/>
            <person name="Nagai Y."/>
            <person name="Iwama N."/>
            <person name="Asano K."/>
            <person name="Naimi T."/>
            <person name="Kuroda H."/>
            <person name="Cui L."/>
            <person name="Yamamoto K."/>
            <person name="Hiramatsu K."/>
        </authorList>
    </citation>
    <scope>NUCLEOTIDE SEQUENCE [LARGE SCALE GENOMIC DNA]</scope>
    <source>
        <strain>MW2</strain>
    </source>
</reference>
<evidence type="ECO:0000255" key="1">
    <source>
        <dbReference type="HAMAP-Rule" id="MF_02070"/>
    </source>
</evidence>
<evidence type="ECO:0000305" key="2"/>
<protein>
    <recommendedName>
        <fullName evidence="1">N-acetylglucosaminyldiphosphoundecaprenol N-acetyl-beta-D-mannosaminyltransferase</fullName>
        <ecNumber evidence="1">2.4.1.187</ecNumber>
    </recommendedName>
    <alternativeName>
        <fullName evidence="1">N-acetylmannosaminyltransferase</fullName>
    </alternativeName>
    <alternativeName>
        <fullName evidence="1">UDP-N-acetylmannosamine transferase</fullName>
    </alternativeName>
    <alternativeName>
        <fullName evidence="1">UDP-N-acetylmannosamine:N-acetylglucosaminyl pyrophosphorylundecaprenol N-acetylmannosaminyltransferase</fullName>
    </alternativeName>
</protein>
<name>TARA_STAAW</name>